<accession>Q2J6Y2</accession>
<sequence length="62" mass="6699">MSSVCDVCGKGPGFGMSVSHSHRRTRRRWNPNIQTVRTVVGGTPKRLNVCASCIKAGKVSRA</sequence>
<name>RL28_FRACC</name>
<reference key="1">
    <citation type="journal article" date="2007" name="Genome Res.">
        <title>Genome characteristics of facultatively symbiotic Frankia sp. strains reflect host range and host plant biogeography.</title>
        <authorList>
            <person name="Normand P."/>
            <person name="Lapierre P."/>
            <person name="Tisa L.S."/>
            <person name="Gogarten J.P."/>
            <person name="Alloisio N."/>
            <person name="Bagnarol E."/>
            <person name="Bassi C.A."/>
            <person name="Berry A.M."/>
            <person name="Bickhart D.M."/>
            <person name="Choisne N."/>
            <person name="Couloux A."/>
            <person name="Cournoyer B."/>
            <person name="Cruveiller S."/>
            <person name="Daubin V."/>
            <person name="Demange N."/>
            <person name="Francino M.P."/>
            <person name="Goltsman E."/>
            <person name="Huang Y."/>
            <person name="Kopp O.R."/>
            <person name="Labarre L."/>
            <person name="Lapidus A."/>
            <person name="Lavire C."/>
            <person name="Marechal J."/>
            <person name="Martinez M."/>
            <person name="Mastronunzio J.E."/>
            <person name="Mullin B.C."/>
            <person name="Niemann J."/>
            <person name="Pujic P."/>
            <person name="Rawnsley T."/>
            <person name="Rouy Z."/>
            <person name="Schenowitz C."/>
            <person name="Sellstedt A."/>
            <person name="Tavares F."/>
            <person name="Tomkins J.P."/>
            <person name="Vallenet D."/>
            <person name="Valverde C."/>
            <person name="Wall L.G."/>
            <person name="Wang Y."/>
            <person name="Medigue C."/>
            <person name="Benson D.R."/>
        </authorList>
    </citation>
    <scope>NUCLEOTIDE SEQUENCE [LARGE SCALE GENOMIC DNA]</scope>
    <source>
        <strain>DSM 45818 / CECT 9043 / HFP020203 / CcI3</strain>
    </source>
</reference>
<proteinExistence type="inferred from homology"/>
<protein>
    <recommendedName>
        <fullName evidence="1">Large ribosomal subunit protein bL28</fullName>
    </recommendedName>
    <alternativeName>
        <fullName evidence="2">50S ribosomal protein L28</fullName>
    </alternativeName>
</protein>
<feature type="chain" id="PRO_1000007236" description="Large ribosomal subunit protein bL28">
    <location>
        <begin position="1"/>
        <end position="62"/>
    </location>
</feature>
<organism>
    <name type="scientific">Frankia casuarinae (strain DSM 45818 / CECT 9043 / HFP020203 / CcI3)</name>
    <dbReference type="NCBI Taxonomy" id="106370"/>
    <lineage>
        <taxon>Bacteria</taxon>
        <taxon>Bacillati</taxon>
        <taxon>Actinomycetota</taxon>
        <taxon>Actinomycetes</taxon>
        <taxon>Frankiales</taxon>
        <taxon>Frankiaceae</taxon>
        <taxon>Frankia</taxon>
    </lineage>
</organism>
<comment type="similarity">
    <text evidence="1">Belongs to the bacterial ribosomal protein bL28 family.</text>
</comment>
<gene>
    <name evidence="1" type="primary">rpmB</name>
    <name type="ordered locus">Francci3_3608</name>
</gene>
<dbReference type="EMBL" id="CP000249">
    <property type="protein sequence ID" value="ABD12960.1"/>
    <property type="molecule type" value="Genomic_DNA"/>
</dbReference>
<dbReference type="RefSeq" id="WP_011437984.1">
    <property type="nucleotide sequence ID" value="NZ_MSEA01000187.1"/>
</dbReference>
<dbReference type="SMR" id="Q2J6Y2"/>
<dbReference type="STRING" id="106370.Francci3_3608"/>
<dbReference type="KEGG" id="fra:Francci3_3608"/>
<dbReference type="eggNOG" id="COG0227">
    <property type="taxonomic scope" value="Bacteria"/>
</dbReference>
<dbReference type="HOGENOM" id="CLU_064548_7_0_11"/>
<dbReference type="OrthoDB" id="9805609at2"/>
<dbReference type="PhylomeDB" id="Q2J6Y2"/>
<dbReference type="Proteomes" id="UP000001937">
    <property type="component" value="Chromosome"/>
</dbReference>
<dbReference type="GO" id="GO:1990904">
    <property type="term" value="C:ribonucleoprotein complex"/>
    <property type="evidence" value="ECO:0007669"/>
    <property type="project" value="UniProtKB-KW"/>
</dbReference>
<dbReference type="GO" id="GO:0005840">
    <property type="term" value="C:ribosome"/>
    <property type="evidence" value="ECO:0007669"/>
    <property type="project" value="UniProtKB-KW"/>
</dbReference>
<dbReference type="GO" id="GO:0003735">
    <property type="term" value="F:structural constituent of ribosome"/>
    <property type="evidence" value="ECO:0007669"/>
    <property type="project" value="InterPro"/>
</dbReference>
<dbReference type="GO" id="GO:0006412">
    <property type="term" value="P:translation"/>
    <property type="evidence" value="ECO:0007669"/>
    <property type="project" value="UniProtKB-UniRule"/>
</dbReference>
<dbReference type="FunFam" id="2.30.170.40:FF:000002">
    <property type="entry name" value="50S ribosomal protein L28"/>
    <property type="match status" value="1"/>
</dbReference>
<dbReference type="Gene3D" id="2.30.170.40">
    <property type="entry name" value="Ribosomal protein L28/L24"/>
    <property type="match status" value="1"/>
</dbReference>
<dbReference type="HAMAP" id="MF_00373">
    <property type="entry name" value="Ribosomal_bL28"/>
    <property type="match status" value="1"/>
</dbReference>
<dbReference type="InterPro" id="IPR050096">
    <property type="entry name" value="Bacterial_rp_bL28"/>
</dbReference>
<dbReference type="InterPro" id="IPR026569">
    <property type="entry name" value="Ribosomal_bL28"/>
</dbReference>
<dbReference type="InterPro" id="IPR034704">
    <property type="entry name" value="Ribosomal_bL28/bL31-like_sf"/>
</dbReference>
<dbReference type="InterPro" id="IPR001383">
    <property type="entry name" value="Ribosomal_bL28_bact-type"/>
</dbReference>
<dbReference type="InterPro" id="IPR037147">
    <property type="entry name" value="Ribosomal_bL28_sf"/>
</dbReference>
<dbReference type="NCBIfam" id="TIGR00009">
    <property type="entry name" value="L28"/>
    <property type="match status" value="1"/>
</dbReference>
<dbReference type="PANTHER" id="PTHR39080">
    <property type="entry name" value="50S RIBOSOMAL PROTEIN L28"/>
    <property type="match status" value="1"/>
</dbReference>
<dbReference type="PANTHER" id="PTHR39080:SF1">
    <property type="entry name" value="LARGE RIBOSOMAL SUBUNIT PROTEIN BL28A"/>
    <property type="match status" value="1"/>
</dbReference>
<dbReference type="Pfam" id="PF00830">
    <property type="entry name" value="Ribosomal_L28"/>
    <property type="match status" value="1"/>
</dbReference>
<dbReference type="SUPFAM" id="SSF143800">
    <property type="entry name" value="L28p-like"/>
    <property type="match status" value="1"/>
</dbReference>
<evidence type="ECO:0000255" key="1">
    <source>
        <dbReference type="HAMAP-Rule" id="MF_00373"/>
    </source>
</evidence>
<evidence type="ECO:0000305" key="2"/>
<keyword id="KW-1185">Reference proteome</keyword>
<keyword id="KW-0687">Ribonucleoprotein</keyword>
<keyword id="KW-0689">Ribosomal protein</keyword>